<accession>P64225</accession>
<accession>Q99TV7</accession>
<feature type="chain" id="PRO_0000122597" description="Aminomethyltransferase">
    <location>
        <begin position="1"/>
        <end position="363"/>
    </location>
</feature>
<sequence>MSSDLKQTPLYQNYVDRGAKIVEFGGWAMPVQFSSIKEEHNAVRYEIGLFDVSHMGEIEVTGKDASQFVQYLLSNDTDNLTTSKALYTALCNEEGGIIDDLVIYKLADDNYLLVVNAANTEKDFNWILKHKEKFDVEVQNVSNQYGQLAIQGPKARDLINQLVDEDVTEMKMFEFKQGVKLFGANVILSQSGYTGEDGFEIYCNIDDTEKIWDGLLEYNVMPCGLGARDTLRLEAGLPLHGQDLTESITPYEGGIAFASKPLIDADFIGKSVLKDQKENGAPRRTVGLELLEKGIARTGYEVMDLDGNIIGEVTSGTQSPSSGKSIALAMIKRDEFEMGRELLVQVRKRQLKAKIVKKNQIDK</sequence>
<dbReference type="EC" id="2.1.2.10" evidence="1"/>
<dbReference type="EMBL" id="BA000018">
    <property type="protein sequence ID" value="BAB42629.1"/>
    <property type="molecule type" value="Genomic_DNA"/>
</dbReference>
<dbReference type="PIR" id="H89933">
    <property type="entry name" value="H89933"/>
</dbReference>
<dbReference type="RefSeq" id="WP_000093349.1">
    <property type="nucleotide sequence ID" value="NC_002745.2"/>
</dbReference>
<dbReference type="SMR" id="P64225"/>
<dbReference type="EnsemblBacteria" id="BAB42629">
    <property type="protein sequence ID" value="BAB42629"/>
    <property type="gene ID" value="BAB42629"/>
</dbReference>
<dbReference type="KEGG" id="sau:SA1367"/>
<dbReference type="HOGENOM" id="CLU_007884_10_2_9"/>
<dbReference type="GO" id="GO:0005829">
    <property type="term" value="C:cytosol"/>
    <property type="evidence" value="ECO:0007669"/>
    <property type="project" value="TreeGrafter"/>
</dbReference>
<dbReference type="GO" id="GO:0005960">
    <property type="term" value="C:glycine cleavage complex"/>
    <property type="evidence" value="ECO:0007669"/>
    <property type="project" value="InterPro"/>
</dbReference>
<dbReference type="GO" id="GO:0004047">
    <property type="term" value="F:aminomethyltransferase activity"/>
    <property type="evidence" value="ECO:0007669"/>
    <property type="project" value="UniProtKB-UniRule"/>
</dbReference>
<dbReference type="GO" id="GO:0008483">
    <property type="term" value="F:transaminase activity"/>
    <property type="evidence" value="ECO:0007669"/>
    <property type="project" value="UniProtKB-KW"/>
</dbReference>
<dbReference type="GO" id="GO:0019464">
    <property type="term" value="P:glycine decarboxylation via glycine cleavage system"/>
    <property type="evidence" value="ECO:0007669"/>
    <property type="project" value="UniProtKB-UniRule"/>
</dbReference>
<dbReference type="FunFam" id="2.40.30.110:FF:000007">
    <property type="entry name" value="Aminomethyltransferase"/>
    <property type="match status" value="1"/>
</dbReference>
<dbReference type="FunFam" id="3.30.70.1400:FF:000001">
    <property type="entry name" value="Aminomethyltransferase"/>
    <property type="match status" value="1"/>
</dbReference>
<dbReference type="FunFam" id="4.10.1250.10:FF:000001">
    <property type="entry name" value="Aminomethyltransferase"/>
    <property type="match status" value="1"/>
</dbReference>
<dbReference type="Gene3D" id="2.40.30.110">
    <property type="entry name" value="Aminomethyltransferase beta-barrel domains"/>
    <property type="match status" value="1"/>
</dbReference>
<dbReference type="Gene3D" id="3.30.70.1400">
    <property type="entry name" value="Aminomethyltransferase beta-barrel domains"/>
    <property type="match status" value="1"/>
</dbReference>
<dbReference type="Gene3D" id="4.10.1250.10">
    <property type="entry name" value="Aminomethyltransferase fragment"/>
    <property type="match status" value="1"/>
</dbReference>
<dbReference type="Gene3D" id="3.30.1360.120">
    <property type="entry name" value="Probable tRNA modification gtpase trme, domain 1"/>
    <property type="match status" value="1"/>
</dbReference>
<dbReference type="HAMAP" id="MF_00259">
    <property type="entry name" value="GcvT"/>
    <property type="match status" value="1"/>
</dbReference>
<dbReference type="InterPro" id="IPR006223">
    <property type="entry name" value="GCS_T"/>
</dbReference>
<dbReference type="InterPro" id="IPR022903">
    <property type="entry name" value="GCS_T_bac"/>
</dbReference>
<dbReference type="InterPro" id="IPR013977">
    <property type="entry name" value="GCST_C"/>
</dbReference>
<dbReference type="InterPro" id="IPR006222">
    <property type="entry name" value="GCV_T_N"/>
</dbReference>
<dbReference type="InterPro" id="IPR028896">
    <property type="entry name" value="GcvT/YgfZ/DmdA"/>
</dbReference>
<dbReference type="InterPro" id="IPR029043">
    <property type="entry name" value="GcvT/YgfZ_C"/>
</dbReference>
<dbReference type="InterPro" id="IPR027266">
    <property type="entry name" value="TrmE/GcvT_dom1"/>
</dbReference>
<dbReference type="NCBIfam" id="TIGR00528">
    <property type="entry name" value="gcvT"/>
    <property type="match status" value="1"/>
</dbReference>
<dbReference type="NCBIfam" id="NF001567">
    <property type="entry name" value="PRK00389.1"/>
    <property type="match status" value="1"/>
</dbReference>
<dbReference type="PANTHER" id="PTHR43757">
    <property type="entry name" value="AMINOMETHYLTRANSFERASE"/>
    <property type="match status" value="1"/>
</dbReference>
<dbReference type="PANTHER" id="PTHR43757:SF2">
    <property type="entry name" value="AMINOMETHYLTRANSFERASE, MITOCHONDRIAL"/>
    <property type="match status" value="1"/>
</dbReference>
<dbReference type="Pfam" id="PF01571">
    <property type="entry name" value="GCV_T"/>
    <property type="match status" value="1"/>
</dbReference>
<dbReference type="Pfam" id="PF08669">
    <property type="entry name" value="GCV_T_C"/>
    <property type="match status" value="1"/>
</dbReference>
<dbReference type="PIRSF" id="PIRSF006487">
    <property type="entry name" value="GcvT"/>
    <property type="match status" value="1"/>
</dbReference>
<dbReference type="SUPFAM" id="SSF101790">
    <property type="entry name" value="Aminomethyltransferase beta-barrel domain"/>
    <property type="match status" value="1"/>
</dbReference>
<dbReference type="SUPFAM" id="SSF103025">
    <property type="entry name" value="Folate-binding domain"/>
    <property type="match status" value="1"/>
</dbReference>
<protein>
    <recommendedName>
        <fullName evidence="1">Aminomethyltransferase</fullName>
        <ecNumber evidence="1">2.1.2.10</ecNumber>
    </recommendedName>
    <alternativeName>
        <fullName evidence="1">Glycine cleavage system T protein</fullName>
    </alternativeName>
</protein>
<comment type="function">
    <text evidence="1">The glycine cleavage system catalyzes the degradation of glycine.</text>
</comment>
<comment type="catalytic activity">
    <reaction evidence="1">
        <text>N(6)-[(R)-S(8)-aminomethyldihydrolipoyl]-L-lysyl-[protein] + (6S)-5,6,7,8-tetrahydrofolate = N(6)-[(R)-dihydrolipoyl]-L-lysyl-[protein] + (6R)-5,10-methylene-5,6,7,8-tetrahydrofolate + NH4(+)</text>
        <dbReference type="Rhea" id="RHEA:16945"/>
        <dbReference type="Rhea" id="RHEA-COMP:10475"/>
        <dbReference type="Rhea" id="RHEA-COMP:10492"/>
        <dbReference type="ChEBI" id="CHEBI:15636"/>
        <dbReference type="ChEBI" id="CHEBI:28938"/>
        <dbReference type="ChEBI" id="CHEBI:57453"/>
        <dbReference type="ChEBI" id="CHEBI:83100"/>
        <dbReference type="ChEBI" id="CHEBI:83143"/>
        <dbReference type="EC" id="2.1.2.10"/>
    </reaction>
</comment>
<comment type="subunit">
    <text evidence="1">The glycine cleavage system is composed of four proteins: P, T, L and H.</text>
</comment>
<comment type="similarity">
    <text evidence="1">Belongs to the GcvT family.</text>
</comment>
<evidence type="ECO:0000255" key="1">
    <source>
        <dbReference type="HAMAP-Rule" id="MF_00259"/>
    </source>
</evidence>
<proteinExistence type="evidence at protein level"/>
<name>GCST_STAAN</name>
<organism>
    <name type="scientific">Staphylococcus aureus (strain N315)</name>
    <dbReference type="NCBI Taxonomy" id="158879"/>
    <lineage>
        <taxon>Bacteria</taxon>
        <taxon>Bacillati</taxon>
        <taxon>Bacillota</taxon>
        <taxon>Bacilli</taxon>
        <taxon>Bacillales</taxon>
        <taxon>Staphylococcaceae</taxon>
        <taxon>Staphylococcus</taxon>
    </lineage>
</organism>
<keyword id="KW-0032">Aminotransferase</keyword>
<keyword id="KW-0808">Transferase</keyword>
<gene>
    <name evidence="1" type="primary">gcvT</name>
    <name type="ordered locus">SA1367</name>
</gene>
<reference key="1">
    <citation type="journal article" date="2001" name="Lancet">
        <title>Whole genome sequencing of meticillin-resistant Staphylococcus aureus.</title>
        <authorList>
            <person name="Kuroda M."/>
            <person name="Ohta T."/>
            <person name="Uchiyama I."/>
            <person name="Baba T."/>
            <person name="Yuzawa H."/>
            <person name="Kobayashi I."/>
            <person name="Cui L."/>
            <person name="Oguchi A."/>
            <person name="Aoki K."/>
            <person name="Nagai Y."/>
            <person name="Lian J.-Q."/>
            <person name="Ito T."/>
            <person name="Kanamori M."/>
            <person name="Matsumaru H."/>
            <person name="Maruyama A."/>
            <person name="Murakami H."/>
            <person name="Hosoyama A."/>
            <person name="Mizutani-Ui Y."/>
            <person name="Takahashi N.K."/>
            <person name="Sawano T."/>
            <person name="Inoue R."/>
            <person name="Kaito C."/>
            <person name="Sekimizu K."/>
            <person name="Hirakawa H."/>
            <person name="Kuhara S."/>
            <person name="Goto S."/>
            <person name="Yabuzaki J."/>
            <person name="Kanehisa M."/>
            <person name="Yamashita A."/>
            <person name="Oshima K."/>
            <person name="Furuya K."/>
            <person name="Yoshino C."/>
            <person name="Shiba T."/>
            <person name="Hattori M."/>
            <person name="Ogasawara N."/>
            <person name="Hayashi H."/>
            <person name="Hiramatsu K."/>
        </authorList>
    </citation>
    <scope>NUCLEOTIDE SEQUENCE [LARGE SCALE GENOMIC DNA]</scope>
    <source>
        <strain>N315</strain>
    </source>
</reference>
<reference key="2">
    <citation type="submission" date="2007-10" db="UniProtKB">
        <title>Shotgun proteomic analysis of total and membrane protein extracts of S. aureus strain N315.</title>
        <authorList>
            <person name="Vaezzadeh A.R."/>
            <person name="Deshusses J."/>
            <person name="Lescuyer P."/>
            <person name="Hochstrasser D.F."/>
        </authorList>
    </citation>
    <scope>IDENTIFICATION BY MASS SPECTROMETRY [LARGE SCALE ANALYSIS]</scope>
    <source>
        <strain>N315</strain>
    </source>
</reference>